<comment type="catalytic activity">
    <reaction evidence="1">
        <text>2 reduced [2Fe-2S]-[ferredoxin] + NADP(+) + H(+) = 2 oxidized [2Fe-2S]-[ferredoxin] + NADPH</text>
        <dbReference type="Rhea" id="RHEA:20125"/>
        <dbReference type="Rhea" id="RHEA-COMP:10000"/>
        <dbReference type="Rhea" id="RHEA-COMP:10001"/>
        <dbReference type="ChEBI" id="CHEBI:15378"/>
        <dbReference type="ChEBI" id="CHEBI:33737"/>
        <dbReference type="ChEBI" id="CHEBI:33738"/>
        <dbReference type="ChEBI" id="CHEBI:57783"/>
        <dbReference type="ChEBI" id="CHEBI:58349"/>
        <dbReference type="EC" id="1.18.1.2"/>
    </reaction>
</comment>
<comment type="cofactor">
    <cofactor evidence="1">
        <name>FAD</name>
        <dbReference type="ChEBI" id="CHEBI:57692"/>
    </cofactor>
    <text evidence="1">Binds 1 FAD per subunit.</text>
</comment>
<comment type="subunit">
    <text evidence="1">Homodimer.</text>
</comment>
<comment type="similarity">
    <text evidence="1">Belongs to the ferredoxin--NADP reductase type 2 family.</text>
</comment>
<keyword id="KW-0274">FAD</keyword>
<keyword id="KW-0285">Flavoprotein</keyword>
<keyword id="KW-0521">NADP</keyword>
<keyword id="KW-0560">Oxidoreductase</keyword>
<protein>
    <recommendedName>
        <fullName evidence="1">Ferredoxin--NADP reductase</fullName>
        <shortName evidence="1">FNR</shortName>
        <shortName evidence="1">Fd-NADP(+) reductase</shortName>
        <ecNumber evidence="1">1.18.1.2</ecNumber>
    </recommendedName>
</protein>
<organism>
    <name type="scientific">Streptococcus suis (strain 05ZYH33)</name>
    <dbReference type="NCBI Taxonomy" id="391295"/>
    <lineage>
        <taxon>Bacteria</taxon>
        <taxon>Bacillati</taxon>
        <taxon>Bacillota</taxon>
        <taxon>Bacilli</taxon>
        <taxon>Lactobacillales</taxon>
        <taxon>Streptococcaceae</taxon>
        <taxon>Streptococcus</taxon>
    </lineage>
</organism>
<feature type="chain" id="PRO_0000364974" description="Ferredoxin--NADP reductase">
    <location>
        <begin position="1"/>
        <end position="322"/>
    </location>
</feature>
<feature type="binding site" evidence="1">
    <location>
        <position position="34"/>
    </location>
    <ligand>
        <name>FAD</name>
        <dbReference type="ChEBI" id="CHEBI:57692"/>
    </ligand>
</feature>
<feature type="binding site" evidence="1">
    <location>
        <position position="42"/>
    </location>
    <ligand>
        <name>FAD</name>
        <dbReference type="ChEBI" id="CHEBI:57692"/>
    </ligand>
</feature>
<feature type="binding site" evidence="1">
    <location>
        <position position="47"/>
    </location>
    <ligand>
        <name>FAD</name>
        <dbReference type="ChEBI" id="CHEBI:57692"/>
    </ligand>
</feature>
<feature type="binding site" evidence="1">
    <location>
        <position position="87"/>
    </location>
    <ligand>
        <name>FAD</name>
        <dbReference type="ChEBI" id="CHEBI:57692"/>
    </ligand>
</feature>
<feature type="binding site" evidence="1">
    <location>
        <position position="119"/>
    </location>
    <ligand>
        <name>FAD</name>
        <dbReference type="ChEBI" id="CHEBI:57692"/>
    </ligand>
</feature>
<feature type="binding site" evidence="1">
    <location>
        <position position="279"/>
    </location>
    <ligand>
        <name>FAD</name>
        <dbReference type="ChEBI" id="CHEBI:57692"/>
    </ligand>
</feature>
<feature type="binding site" evidence="1">
    <location>
        <position position="320"/>
    </location>
    <ligand>
        <name>FAD</name>
        <dbReference type="ChEBI" id="CHEBI:57692"/>
    </ligand>
</feature>
<reference key="1">
    <citation type="journal article" date="2007" name="PLoS ONE">
        <title>A glimpse of streptococcal toxic shock syndrome from comparative genomics of S. suis 2 Chinese isolates.</title>
        <authorList>
            <person name="Chen C."/>
            <person name="Tang J."/>
            <person name="Dong W."/>
            <person name="Wang C."/>
            <person name="Feng Y."/>
            <person name="Wang J."/>
            <person name="Zheng F."/>
            <person name="Pan X."/>
            <person name="Liu D."/>
            <person name="Li M."/>
            <person name="Song Y."/>
            <person name="Zhu X."/>
            <person name="Sun H."/>
            <person name="Feng T."/>
            <person name="Guo Z."/>
            <person name="Ju A."/>
            <person name="Ge J."/>
            <person name="Dong Y."/>
            <person name="Sun W."/>
            <person name="Jiang Y."/>
            <person name="Wang J."/>
            <person name="Yan J."/>
            <person name="Yang H."/>
            <person name="Wang X."/>
            <person name="Gao G.F."/>
            <person name="Yang R."/>
            <person name="Wang J."/>
            <person name="Yu J."/>
        </authorList>
    </citation>
    <scope>NUCLEOTIDE SEQUENCE [LARGE SCALE GENOMIC DNA]</scope>
    <source>
        <strain>05ZYH33</strain>
    </source>
</reference>
<sequence>MTQVYDITIIGGGPVGLFAAFYAHLRQAKVKIIDSLPQLGGQPAILYPEKAILDIPAFPSLTGQELTDNLLAQLAPFDTTICLNETLTAIEPGETITLTTNKGNHQTKTLIIAMGGGAFKPRPLEIDGADSFDNVHYHVSNIQQYADKDIVVLGGGDSAVDWSLAFEKIAKTTQIIHRRDNFRALEHSVEELKQSSVTIHTPFIPKGLSGENGRASAIDFDKVKSEDKLTLSFDHLFVNYGFKSSVGTLKEWGLELNRHRIVVNSKQETSVPGIYAIGDCCFYEGKIDLIATGLGEAPTAVNNAMNYLNPNEKVQPKHSTSL</sequence>
<gene>
    <name type="ordered locus">SSU05_1986</name>
</gene>
<accession>A4VXW3</accession>
<proteinExistence type="inferred from homology"/>
<evidence type="ECO:0000255" key="1">
    <source>
        <dbReference type="HAMAP-Rule" id="MF_01685"/>
    </source>
</evidence>
<name>FENR_STRSY</name>
<dbReference type="EC" id="1.18.1.2" evidence="1"/>
<dbReference type="EMBL" id="CP000407">
    <property type="protein sequence ID" value="ABP90952.1"/>
    <property type="molecule type" value="Genomic_DNA"/>
</dbReference>
<dbReference type="SMR" id="A4VXW3"/>
<dbReference type="STRING" id="391295.SSU05_1986"/>
<dbReference type="KEGG" id="ssu:SSU05_1986"/>
<dbReference type="eggNOG" id="COG0492">
    <property type="taxonomic scope" value="Bacteria"/>
</dbReference>
<dbReference type="HOGENOM" id="CLU_031864_5_5_9"/>
<dbReference type="BioCyc" id="SSUI391295:GHI8-2041-MONOMER"/>
<dbReference type="GO" id="GO:0004324">
    <property type="term" value="F:ferredoxin-NADP+ reductase activity"/>
    <property type="evidence" value="ECO:0007669"/>
    <property type="project" value="UniProtKB-UniRule"/>
</dbReference>
<dbReference type="GO" id="GO:0050660">
    <property type="term" value="F:flavin adenine dinucleotide binding"/>
    <property type="evidence" value="ECO:0007669"/>
    <property type="project" value="UniProtKB-UniRule"/>
</dbReference>
<dbReference type="GO" id="GO:0050661">
    <property type="term" value="F:NADP binding"/>
    <property type="evidence" value="ECO:0007669"/>
    <property type="project" value="UniProtKB-UniRule"/>
</dbReference>
<dbReference type="Gene3D" id="3.50.50.60">
    <property type="entry name" value="FAD/NAD(P)-binding domain"/>
    <property type="match status" value="2"/>
</dbReference>
<dbReference type="HAMAP" id="MF_01685">
    <property type="entry name" value="FENR2"/>
    <property type="match status" value="1"/>
</dbReference>
<dbReference type="InterPro" id="IPR036188">
    <property type="entry name" value="FAD/NAD-bd_sf"/>
</dbReference>
<dbReference type="InterPro" id="IPR023753">
    <property type="entry name" value="FAD/NAD-binding_dom"/>
</dbReference>
<dbReference type="InterPro" id="IPR022890">
    <property type="entry name" value="Fd--NADP_Rdtase_type_2"/>
</dbReference>
<dbReference type="InterPro" id="IPR050097">
    <property type="entry name" value="Ferredoxin-NADP_redctase_2"/>
</dbReference>
<dbReference type="PANTHER" id="PTHR48105">
    <property type="entry name" value="THIOREDOXIN REDUCTASE 1-RELATED-RELATED"/>
    <property type="match status" value="1"/>
</dbReference>
<dbReference type="Pfam" id="PF07992">
    <property type="entry name" value="Pyr_redox_2"/>
    <property type="match status" value="1"/>
</dbReference>
<dbReference type="PRINTS" id="PR00368">
    <property type="entry name" value="FADPNR"/>
</dbReference>
<dbReference type="PRINTS" id="PR00469">
    <property type="entry name" value="PNDRDTASEII"/>
</dbReference>
<dbReference type="SUPFAM" id="SSF51905">
    <property type="entry name" value="FAD/NAD(P)-binding domain"/>
    <property type="match status" value="1"/>
</dbReference>